<protein>
    <recommendedName>
        <fullName evidence="1">Methionine aminopeptidase 2</fullName>
        <shortName evidence="1">MAP 2</shortName>
        <shortName evidence="1">MetAP 2</shortName>
        <ecNumber evidence="1">3.4.11.18</ecNumber>
    </recommendedName>
    <alternativeName>
        <fullName evidence="1">Peptidase M</fullName>
    </alternativeName>
</protein>
<comment type="function">
    <text evidence="1">Cotranslationally removes the N-terminal methionine from nascent proteins. The N-terminal methionine is often cleaved when the second residue in the primary sequence is small and uncharged (Met-Ala-, Cys, Gly, Pro, Ser, Thr, or Val).</text>
</comment>
<comment type="catalytic activity">
    <reaction evidence="1">
        <text>Release of N-terminal amino acids, preferentially methionine, from peptides and arylamides.</text>
        <dbReference type="EC" id="3.4.11.18"/>
    </reaction>
</comment>
<comment type="cofactor">
    <cofactor evidence="1">
        <name>Co(2+)</name>
        <dbReference type="ChEBI" id="CHEBI:48828"/>
    </cofactor>
    <cofactor evidence="1">
        <name>Zn(2+)</name>
        <dbReference type="ChEBI" id="CHEBI:29105"/>
    </cofactor>
    <cofactor evidence="1">
        <name>Mn(2+)</name>
        <dbReference type="ChEBI" id="CHEBI:29035"/>
    </cofactor>
    <cofactor evidence="1">
        <name>Fe(2+)</name>
        <dbReference type="ChEBI" id="CHEBI:29033"/>
    </cofactor>
    <text evidence="1">Binds 2 divalent metal cations per subunit. Has a high-affinity and a low affinity metal-binding site. The true nature of the physiological cofactor is under debate. The enzyme is active with cobalt, zinc, manganese or divalent iron ions. Most likely, methionine aminopeptidases function as mononuclear Fe(2+)-metalloproteases under physiological conditions, and the catalytically relevant metal-binding site has been assigned to the histidine-containing high-affinity site.</text>
</comment>
<comment type="subcellular location">
    <subcellularLocation>
        <location evidence="1 3">Cytoplasm</location>
    </subcellularLocation>
</comment>
<comment type="similarity">
    <text evidence="1">Belongs to the peptidase M24A family. Methionine aminopeptidase eukaryotic type 2 subfamily.</text>
</comment>
<feature type="chain" id="PRO_0000311766" description="Methionine aminopeptidase 2">
    <location>
        <begin position="1"/>
        <end position="426"/>
    </location>
</feature>
<feature type="region of interest" description="Disordered" evidence="2">
    <location>
        <begin position="1"/>
        <end position="72"/>
    </location>
</feature>
<feature type="compositionally biased region" description="Basic and acidic residues" evidence="2">
    <location>
        <begin position="10"/>
        <end position="34"/>
    </location>
</feature>
<feature type="compositionally biased region" description="Basic residues" evidence="2">
    <location>
        <begin position="47"/>
        <end position="60"/>
    </location>
</feature>
<feature type="binding site" evidence="1">
    <location>
        <position position="179"/>
    </location>
    <ligand>
        <name>substrate</name>
    </ligand>
</feature>
<feature type="binding site" evidence="1">
    <location>
        <position position="199"/>
    </location>
    <ligand>
        <name>a divalent metal cation</name>
        <dbReference type="ChEBI" id="CHEBI:60240"/>
        <label>1</label>
    </ligand>
</feature>
<feature type="binding site" evidence="1">
    <location>
        <position position="210"/>
    </location>
    <ligand>
        <name>a divalent metal cation</name>
        <dbReference type="ChEBI" id="CHEBI:60240"/>
        <label>1</label>
    </ligand>
</feature>
<feature type="binding site" evidence="1">
    <location>
        <position position="210"/>
    </location>
    <ligand>
        <name>a divalent metal cation</name>
        <dbReference type="ChEBI" id="CHEBI:60240"/>
        <label>2</label>
        <note>catalytic</note>
    </ligand>
</feature>
<feature type="binding site" evidence="1">
    <location>
        <position position="279"/>
    </location>
    <ligand>
        <name>a divalent metal cation</name>
        <dbReference type="ChEBI" id="CHEBI:60240"/>
        <label>2</label>
        <note>catalytic</note>
    </ligand>
</feature>
<feature type="binding site" evidence="1">
    <location>
        <position position="287"/>
    </location>
    <ligand>
        <name>substrate</name>
    </ligand>
</feature>
<feature type="binding site" evidence="1">
    <location>
        <position position="312"/>
    </location>
    <ligand>
        <name>a divalent metal cation</name>
        <dbReference type="ChEBI" id="CHEBI:60240"/>
        <label>2</label>
        <note>catalytic</note>
    </ligand>
</feature>
<feature type="binding site" evidence="1">
    <location>
        <position position="407"/>
    </location>
    <ligand>
        <name>a divalent metal cation</name>
        <dbReference type="ChEBI" id="CHEBI:60240"/>
        <label>1</label>
    </ligand>
</feature>
<feature type="binding site" evidence="1">
    <location>
        <position position="407"/>
    </location>
    <ligand>
        <name>a divalent metal cation</name>
        <dbReference type="ChEBI" id="CHEBI:60240"/>
        <label>2</label>
        <note>catalytic</note>
    </ligand>
</feature>
<reference key="1">
    <citation type="journal article" date="2002" name="Nature">
        <title>The genome sequence of Schizosaccharomyces pombe.</title>
        <authorList>
            <person name="Wood V."/>
            <person name="Gwilliam R."/>
            <person name="Rajandream M.A."/>
            <person name="Lyne M.H."/>
            <person name="Lyne R."/>
            <person name="Stewart A."/>
            <person name="Sgouros J.G."/>
            <person name="Peat N."/>
            <person name="Hayles J."/>
            <person name="Baker S.G."/>
            <person name="Basham D."/>
            <person name="Bowman S."/>
            <person name="Brooks K."/>
            <person name="Brown D."/>
            <person name="Brown S."/>
            <person name="Chillingworth T."/>
            <person name="Churcher C.M."/>
            <person name="Collins M."/>
            <person name="Connor R."/>
            <person name="Cronin A."/>
            <person name="Davis P."/>
            <person name="Feltwell T."/>
            <person name="Fraser A."/>
            <person name="Gentles S."/>
            <person name="Goble A."/>
            <person name="Hamlin N."/>
            <person name="Harris D.E."/>
            <person name="Hidalgo J."/>
            <person name="Hodgson G."/>
            <person name="Holroyd S."/>
            <person name="Hornsby T."/>
            <person name="Howarth S."/>
            <person name="Huckle E.J."/>
            <person name="Hunt S."/>
            <person name="Jagels K."/>
            <person name="James K.D."/>
            <person name="Jones L."/>
            <person name="Jones M."/>
            <person name="Leather S."/>
            <person name="McDonald S."/>
            <person name="McLean J."/>
            <person name="Mooney P."/>
            <person name="Moule S."/>
            <person name="Mungall K.L."/>
            <person name="Murphy L.D."/>
            <person name="Niblett D."/>
            <person name="Odell C."/>
            <person name="Oliver K."/>
            <person name="O'Neil S."/>
            <person name="Pearson D."/>
            <person name="Quail M.A."/>
            <person name="Rabbinowitsch E."/>
            <person name="Rutherford K.M."/>
            <person name="Rutter S."/>
            <person name="Saunders D."/>
            <person name="Seeger K."/>
            <person name="Sharp S."/>
            <person name="Skelton J."/>
            <person name="Simmonds M.N."/>
            <person name="Squares R."/>
            <person name="Squares S."/>
            <person name="Stevens K."/>
            <person name="Taylor K."/>
            <person name="Taylor R.G."/>
            <person name="Tivey A."/>
            <person name="Walsh S.V."/>
            <person name="Warren T."/>
            <person name="Whitehead S."/>
            <person name="Woodward J.R."/>
            <person name="Volckaert G."/>
            <person name="Aert R."/>
            <person name="Robben J."/>
            <person name="Grymonprez B."/>
            <person name="Weltjens I."/>
            <person name="Vanstreels E."/>
            <person name="Rieger M."/>
            <person name="Schaefer M."/>
            <person name="Mueller-Auer S."/>
            <person name="Gabel C."/>
            <person name="Fuchs M."/>
            <person name="Duesterhoeft A."/>
            <person name="Fritzc C."/>
            <person name="Holzer E."/>
            <person name="Moestl D."/>
            <person name="Hilbert H."/>
            <person name="Borzym K."/>
            <person name="Langer I."/>
            <person name="Beck A."/>
            <person name="Lehrach H."/>
            <person name="Reinhardt R."/>
            <person name="Pohl T.M."/>
            <person name="Eger P."/>
            <person name="Zimmermann W."/>
            <person name="Wedler H."/>
            <person name="Wambutt R."/>
            <person name="Purnelle B."/>
            <person name="Goffeau A."/>
            <person name="Cadieu E."/>
            <person name="Dreano S."/>
            <person name="Gloux S."/>
            <person name="Lelaure V."/>
            <person name="Mottier S."/>
            <person name="Galibert F."/>
            <person name="Aves S.J."/>
            <person name="Xiang Z."/>
            <person name="Hunt C."/>
            <person name="Moore K."/>
            <person name="Hurst S.M."/>
            <person name="Lucas M."/>
            <person name="Rochet M."/>
            <person name="Gaillardin C."/>
            <person name="Tallada V.A."/>
            <person name="Garzon A."/>
            <person name="Thode G."/>
            <person name="Daga R.R."/>
            <person name="Cruzado L."/>
            <person name="Jimenez J."/>
            <person name="Sanchez M."/>
            <person name="del Rey F."/>
            <person name="Benito J."/>
            <person name="Dominguez A."/>
            <person name="Revuelta J.L."/>
            <person name="Moreno S."/>
            <person name="Armstrong J."/>
            <person name="Forsburg S.L."/>
            <person name="Cerutti L."/>
            <person name="Lowe T."/>
            <person name="McCombie W.R."/>
            <person name="Paulsen I."/>
            <person name="Potashkin J."/>
            <person name="Shpakovski G.V."/>
            <person name="Ussery D."/>
            <person name="Barrell B.G."/>
            <person name="Nurse P."/>
        </authorList>
    </citation>
    <scope>NUCLEOTIDE SEQUENCE [LARGE SCALE GENOMIC DNA]</scope>
    <source>
        <strain>972 / ATCC 24843</strain>
    </source>
</reference>
<reference key="2">
    <citation type="journal article" date="2006" name="Nat. Biotechnol.">
        <title>ORFeome cloning and global analysis of protein localization in the fission yeast Schizosaccharomyces pombe.</title>
        <authorList>
            <person name="Matsuyama A."/>
            <person name="Arai R."/>
            <person name="Yashiroda Y."/>
            <person name="Shirai A."/>
            <person name="Kamata A."/>
            <person name="Sekido S."/>
            <person name="Kobayashi Y."/>
            <person name="Hashimoto A."/>
            <person name="Hamamoto M."/>
            <person name="Hiraoka Y."/>
            <person name="Horinouchi S."/>
            <person name="Yoshida M."/>
        </authorList>
    </citation>
    <scope>SUBCELLULAR LOCATION [LARGE SCALE ANALYSIS]</scope>
</reference>
<sequence>MTSATTTEATAKDLQEKLSLKENDVVEDDGKVEENDAAEEGASNGEKKKKKKKKSSKKKKTPQEQTNPPTVGLSKIFVNKKYPVGEVCDYAEDNLWRTTDEEKRALDRQNFDQYNDLRRAAEVHRQARQYAQSVIKPGMSMMDVVNTIENTTRALVEEDGLKSGIGFPTGVSLNHCAAHYTPNAGDTTILKEKDVMKVDIGVHVNGRIVDSAFTMSFDPQYDNLLAAVKAATNKGIEEAGIDARLNEIGEAIQEVMESYEVEINGKTHQVKSIRNLCGHNLDPYIIHGGKSVPIVKGGEEIKMEEGEIFAIETFGSTGRGVVHEDMECSHYAKIPDAGHIPLRLPRAKALLNTITQNFGTLPFCRRYLDRIGESKYLLALNNLVSAGIVQDYPPLCDIRGSYTAQFEHTIILHPTQKEVVSRGDDY</sequence>
<keyword id="KW-0031">Aminopeptidase</keyword>
<keyword id="KW-0963">Cytoplasm</keyword>
<keyword id="KW-0378">Hydrolase</keyword>
<keyword id="KW-0479">Metal-binding</keyword>
<keyword id="KW-0645">Protease</keyword>
<keyword id="KW-1185">Reference proteome</keyword>
<organism>
    <name type="scientific">Schizosaccharomyces pombe (strain 972 / ATCC 24843)</name>
    <name type="common">Fission yeast</name>
    <dbReference type="NCBI Taxonomy" id="284812"/>
    <lineage>
        <taxon>Eukaryota</taxon>
        <taxon>Fungi</taxon>
        <taxon>Dikarya</taxon>
        <taxon>Ascomycota</taxon>
        <taxon>Taphrinomycotina</taxon>
        <taxon>Schizosaccharomycetes</taxon>
        <taxon>Schizosaccharomycetales</taxon>
        <taxon>Schizosaccharomycetaceae</taxon>
        <taxon>Schizosaccharomyces</taxon>
    </lineage>
</organism>
<evidence type="ECO:0000255" key="1">
    <source>
        <dbReference type="HAMAP-Rule" id="MF_03175"/>
    </source>
</evidence>
<evidence type="ECO:0000256" key="2">
    <source>
        <dbReference type="SAM" id="MobiDB-lite"/>
    </source>
</evidence>
<evidence type="ECO:0000269" key="3">
    <source>
    </source>
</evidence>
<accession>O60085</accession>
<gene>
    <name type="primary">fma2</name>
    <name type="synonym">map2</name>
    <name type="ORF">SPBC14C8.03</name>
</gene>
<name>MAP2_SCHPO</name>
<proteinExistence type="inferred from homology"/>
<dbReference type="EC" id="3.4.11.18" evidence="1"/>
<dbReference type="EMBL" id="CU329671">
    <property type="protein sequence ID" value="CAA18421.1"/>
    <property type="molecule type" value="Genomic_DNA"/>
</dbReference>
<dbReference type="PIR" id="T39431">
    <property type="entry name" value="T39431"/>
</dbReference>
<dbReference type="RefSeq" id="NP_595906.1">
    <property type="nucleotide sequence ID" value="NM_001021814.2"/>
</dbReference>
<dbReference type="SMR" id="O60085"/>
<dbReference type="BioGRID" id="276246">
    <property type="interactions" value="3"/>
</dbReference>
<dbReference type="FunCoup" id="O60085">
    <property type="interactions" value="934"/>
</dbReference>
<dbReference type="STRING" id="284812.O60085"/>
<dbReference type="MEROPS" id="M24.002"/>
<dbReference type="iPTMnet" id="O60085"/>
<dbReference type="PaxDb" id="4896-SPBC14C8.03.1"/>
<dbReference type="EnsemblFungi" id="SPBC14C8.03.1">
    <property type="protein sequence ID" value="SPBC14C8.03.1:pep"/>
    <property type="gene ID" value="SPBC14C8.03"/>
</dbReference>
<dbReference type="GeneID" id="2539692"/>
<dbReference type="KEGG" id="spo:2539692"/>
<dbReference type="PomBase" id="SPBC14C8.03">
    <property type="gene designation" value="fma2"/>
</dbReference>
<dbReference type="VEuPathDB" id="FungiDB:SPBC14C8.03"/>
<dbReference type="eggNOG" id="KOG2775">
    <property type="taxonomic scope" value="Eukaryota"/>
</dbReference>
<dbReference type="HOGENOM" id="CLU_015857_7_1_1"/>
<dbReference type="InParanoid" id="O60085"/>
<dbReference type="OMA" id="PFAKRWL"/>
<dbReference type="PhylomeDB" id="O60085"/>
<dbReference type="Reactome" id="R-SPO-2514859">
    <property type="pathway name" value="Inactivation, recovery and regulation of the phototransduction cascade"/>
</dbReference>
<dbReference type="PRO" id="PR:O60085"/>
<dbReference type="Proteomes" id="UP000002485">
    <property type="component" value="Chromosome II"/>
</dbReference>
<dbReference type="GO" id="GO:0005737">
    <property type="term" value="C:cytoplasm"/>
    <property type="evidence" value="ECO:0000318"/>
    <property type="project" value="GO_Central"/>
</dbReference>
<dbReference type="GO" id="GO:0005829">
    <property type="term" value="C:cytosol"/>
    <property type="evidence" value="ECO:0007005"/>
    <property type="project" value="PomBase"/>
</dbReference>
<dbReference type="GO" id="GO:0004177">
    <property type="term" value="F:aminopeptidase activity"/>
    <property type="evidence" value="ECO:0000318"/>
    <property type="project" value="GO_Central"/>
</dbReference>
<dbReference type="GO" id="GO:0004239">
    <property type="term" value="F:initiator methionyl aminopeptidase activity"/>
    <property type="evidence" value="ECO:0000303"/>
    <property type="project" value="PomBase"/>
</dbReference>
<dbReference type="GO" id="GO:0046872">
    <property type="term" value="F:metal ion binding"/>
    <property type="evidence" value="ECO:0007669"/>
    <property type="project" value="UniProtKB-UniRule"/>
</dbReference>
<dbReference type="GO" id="GO:0070006">
    <property type="term" value="F:metalloaminopeptidase activity"/>
    <property type="evidence" value="ECO:0007669"/>
    <property type="project" value="UniProtKB-UniRule"/>
</dbReference>
<dbReference type="GO" id="GO:0008235">
    <property type="term" value="F:metalloexopeptidase activity"/>
    <property type="evidence" value="ECO:0000318"/>
    <property type="project" value="GO_Central"/>
</dbReference>
<dbReference type="GO" id="GO:0016485">
    <property type="term" value="P:protein processing"/>
    <property type="evidence" value="ECO:0000266"/>
    <property type="project" value="PomBase"/>
</dbReference>
<dbReference type="CDD" id="cd01088">
    <property type="entry name" value="MetAP2"/>
    <property type="match status" value="1"/>
</dbReference>
<dbReference type="Gene3D" id="3.90.230.10">
    <property type="entry name" value="Creatinase/methionine aminopeptidase superfamily"/>
    <property type="match status" value="1"/>
</dbReference>
<dbReference type="Gene3D" id="1.10.10.10">
    <property type="entry name" value="Winged helix-like DNA-binding domain superfamily/Winged helix DNA-binding domain"/>
    <property type="match status" value="1"/>
</dbReference>
<dbReference type="HAMAP" id="MF_03175">
    <property type="entry name" value="MetAP_2_euk"/>
    <property type="match status" value="1"/>
</dbReference>
<dbReference type="InterPro" id="IPR036005">
    <property type="entry name" value="Creatinase/aminopeptidase-like"/>
</dbReference>
<dbReference type="InterPro" id="IPR050247">
    <property type="entry name" value="Met_Aminopeptidase_Type2"/>
</dbReference>
<dbReference type="InterPro" id="IPR000994">
    <property type="entry name" value="Pept_M24"/>
</dbReference>
<dbReference type="InterPro" id="IPR001714">
    <property type="entry name" value="Pept_M24_MAP"/>
</dbReference>
<dbReference type="InterPro" id="IPR002468">
    <property type="entry name" value="Pept_M24A_MAP2"/>
</dbReference>
<dbReference type="InterPro" id="IPR018349">
    <property type="entry name" value="Pept_M24A_MAP2_BS"/>
</dbReference>
<dbReference type="InterPro" id="IPR036388">
    <property type="entry name" value="WH-like_DNA-bd_sf"/>
</dbReference>
<dbReference type="InterPro" id="IPR036390">
    <property type="entry name" value="WH_DNA-bd_sf"/>
</dbReference>
<dbReference type="NCBIfam" id="TIGR00501">
    <property type="entry name" value="met_pdase_II"/>
    <property type="match status" value="1"/>
</dbReference>
<dbReference type="PANTHER" id="PTHR45777">
    <property type="entry name" value="METHIONINE AMINOPEPTIDASE 2"/>
    <property type="match status" value="1"/>
</dbReference>
<dbReference type="PANTHER" id="PTHR45777:SF2">
    <property type="entry name" value="METHIONINE AMINOPEPTIDASE 2"/>
    <property type="match status" value="1"/>
</dbReference>
<dbReference type="Pfam" id="PF00557">
    <property type="entry name" value="Peptidase_M24"/>
    <property type="match status" value="1"/>
</dbReference>
<dbReference type="PRINTS" id="PR00599">
    <property type="entry name" value="MAPEPTIDASE"/>
</dbReference>
<dbReference type="SUPFAM" id="SSF55920">
    <property type="entry name" value="Creatinase/aminopeptidase"/>
    <property type="match status" value="1"/>
</dbReference>
<dbReference type="SUPFAM" id="SSF46785">
    <property type="entry name" value="Winged helix' DNA-binding domain"/>
    <property type="match status" value="1"/>
</dbReference>
<dbReference type="PROSITE" id="PS01202">
    <property type="entry name" value="MAP_2"/>
    <property type="match status" value="1"/>
</dbReference>